<organism>
    <name type="scientific">Salmonella heidelberg (strain SL476)</name>
    <dbReference type="NCBI Taxonomy" id="454169"/>
    <lineage>
        <taxon>Bacteria</taxon>
        <taxon>Pseudomonadati</taxon>
        <taxon>Pseudomonadota</taxon>
        <taxon>Gammaproteobacteria</taxon>
        <taxon>Enterobacterales</taxon>
        <taxon>Enterobacteriaceae</taxon>
        <taxon>Salmonella</taxon>
    </lineage>
</organism>
<comment type="function">
    <text evidence="1">Catalyzes the synthesis of activated sulfate.</text>
</comment>
<comment type="catalytic activity">
    <reaction evidence="1">
        <text>adenosine 5'-phosphosulfate + ATP = 3'-phosphoadenylyl sulfate + ADP + H(+)</text>
        <dbReference type="Rhea" id="RHEA:24152"/>
        <dbReference type="ChEBI" id="CHEBI:15378"/>
        <dbReference type="ChEBI" id="CHEBI:30616"/>
        <dbReference type="ChEBI" id="CHEBI:58243"/>
        <dbReference type="ChEBI" id="CHEBI:58339"/>
        <dbReference type="ChEBI" id="CHEBI:456216"/>
        <dbReference type="EC" id="2.7.1.25"/>
    </reaction>
</comment>
<comment type="pathway">
    <text evidence="1">Sulfur metabolism; hydrogen sulfide biosynthesis; sulfite from sulfate: step 2/3.</text>
</comment>
<comment type="similarity">
    <text evidence="1">Belongs to the APS kinase family.</text>
</comment>
<evidence type="ECO:0000255" key="1">
    <source>
        <dbReference type="HAMAP-Rule" id="MF_00065"/>
    </source>
</evidence>
<accession>B4TFX0</accession>
<reference key="1">
    <citation type="journal article" date="2011" name="J. Bacteriol.">
        <title>Comparative genomics of 28 Salmonella enterica isolates: evidence for CRISPR-mediated adaptive sublineage evolution.</title>
        <authorList>
            <person name="Fricke W.F."/>
            <person name="Mammel M.K."/>
            <person name="McDermott P.F."/>
            <person name="Tartera C."/>
            <person name="White D.G."/>
            <person name="Leclerc J.E."/>
            <person name="Ravel J."/>
            <person name="Cebula T.A."/>
        </authorList>
    </citation>
    <scope>NUCLEOTIDE SEQUENCE [LARGE SCALE GENOMIC DNA]</scope>
    <source>
        <strain>SL476</strain>
    </source>
</reference>
<gene>
    <name evidence="1" type="primary">cysC</name>
    <name type="ordered locus">SeHA_C3123</name>
</gene>
<name>CYSC_SALHS</name>
<protein>
    <recommendedName>
        <fullName evidence="1">Adenylyl-sulfate kinase</fullName>
        <ecNumber evidence="1">2.7.1.25</ecNumber>
    </recommendedName>
    <alternativeName>
        <fullName evidence="1">APS kinase</fullName>
    </alternativeName>
    <alternativeName>
        <fullName evidence="1">ATP adenosine-5'-phosphosulfate 3'-phosphotransferase</fullName>
    </alternativeName>
    <alternativeName>
        <fullName evidence="1">Adenosine-5'-phosphosulfate kinase</fullName>
    </alternativeName>
</protein>
<feature type="chain" id="PRO_1000092248" description="Adenylyl-sulfate kinase">
    <location>
        <begin position="1"/>
        <end position="201"/>
    </location>
</feature>
<feature type="active site" description="Phosphoserine intermediate" evidence="1">
    <location>
        <position position="109"/>
    </location>
</feature>
<feature type="binding site" evidence="1">
    <location>
        <begin position="35"/>
        <end position="42"/>
    </location>
    <ligand>
        <name>ATP</name>
        <dbReference type="ChEBI" id="CHEBI:30616"/>
    </ligand>
</feature>
<sequence length="201" mass="22385">MALHDENVVWHSHPVTVAAREQLHGHRGVVLWFTGLSGSGKSTVAGALEEALHQRGVSTYLLDGDNVRHGLCRDLGFSDADRQENIRRVGEVASLMADAGLIVLTAFISPHRAERQLVKERVGHDRFIEIYVNTPLAICEQRDPKGLYKKARAGELRNFTGIDAIYEAPDSPQVHLNGEQLVTNLVSQLLDLLRRRDIIRS</sequence>
<keyword id="KW-0067">ATP-binding</keyword>
<keyword id="KW-0418">Kinase</keyword>
<keyword id="KW-0547">Nucleotide-binding</keyword>
<keyword id="KW-0597">Phosphoprotein</keyword>
<keyword id="KW-0808">Transferase</keyword>
<dbReference type="EC" id="2.7.1.25" evidence="1"/>
<dbReference type="EMBL" id="CP001120">
    <property type="protein sequence ID" value="ACF67706.1"/>
    <property type="molecule type" value="Genomic_DNA"/>
</dbReference>
<dbReference type="RefSeq" id="WP_001173663.1">
    <property type="nucleotide sequence ID" value="NC_011083.1"/>
</dbReference>
<dbReference type="SMR" id="B4TFX0"/>
<dbReference type="KEGG" id="seh:SeHA_C3123"/>
<dbReference type="HOGENOM" id="CLU_046932_1_0_6"/>
<dbReference type="UniPathway" id="UPA00140">
    <property type="reaction ID" value="UER00205"/>
</dbReference>
<dbReference type="Proteomes" id="UP000001866">
    <property type="component" value="Chromosome"/>
</dbReference>
<dbReference type="GO" id="GO:0004020">
    <property type="term" value="F:adenylylsulfate kinase activity"/>
    <property type="evidence" value="ECO:0007669"/>
    <property type="project" value="UniProtKB-UniRule"/>
</dbReference>
<dbReference type="GO" id="GO:0005524">
    <property type="term" value="F:ATP binding"/>
    <property type="evidence" value="ECO:0007669"/>
    <property type="project" value="UniProtKB-UniRule"/>
</dbReference>
<dbReference type="GO" id="GO:0070814">
    <property type="term" value="P:hydrogen sulfide biosynthetic process"/>
    <property type="evidence" value="ECO:0007669"/>
    <property type="project" value="UniProtKB-UniRule"/>
</dbReference>
<dbReference type="GO" id="GO:0000103">
    <property type="term" value="P:sulfate assimilation"/>
    <property type="evidence" value="ECO:0007669"/>
    <property type="project" value="UniProtKB-UniRule"/>
</dbReference>
<dbReference type="CDD" id="cd02027">
    <property type="entry name" value="APSK"/>
    <property type="match status" value="1"/>
</dbReference>
<dbReference type="FunFam" id="3.40.50.300:FF:000212">
    <property type="entry name" value="Adenylyl-sulfate kinase"/>
    <property type="match status" value="1"/>
</dbReference>
<dbReference type="Gene3D" id="3.40.50.300">
    <property type="entry name" value="P-loop containing nucleotide triphosphate hydrolases"/>
    <property type="match status" value="1"/>
</dbReference>
<dbReference type="HAMAP" id="MF_00065">
    <property type="entry name" value="Adenylyl_sulf_kinase"/>
    <property type="match status" value="1"/>
</dbReference>
<dbReference type="InterPro" id="IPR002891">
    <property type="entry name" value="APS_kinase"/>
</dbReference>
<dbReference type="InterPro" id="IPR027417">
    <property type="entry name" value="P-loop_NTPase"/>
</dbReference>
<dbReference type="NCBIfam" id="TIGR00455">
    <property type="entry name" value="apsK"/>
    <property type="match status" value="1"/>
</dbReference>
<dbReference type="NCBIfam" id="NF003013">
    <property type="entry name" value="PRK03846.1"/>
    <property type="match status" value="1"/>
</dbReference>
<dbReference type="PANTHER" id="PTHR11055:SF63">
    <property type="entry name" value="ADENYLYL-SULFATE KINASE 1, CHLOROPLASTIC"/>
    <property type="match status" value="1"/>
</dbReference>
<dbReference type="PANTHER" id="PTHR11055">
    <property type="entry name" value="BIFUNCTIONAL 3'-PHOSPHOADENOSINE 5'-PHOSPHOSULFATE SYNTHASE"/>
    <property type="match status" value="1"/>
</dbReference>
<dbReference type="Pfam" id="PF01583">
    <property type="entry name" value="APS_kinase"/>
    <property type="match status" value="1"/>
</dbReference>
<dbReference type="SUPFAM" id="SSF52540">
    <property type="entry name" value="P-loop containing nucleoside triphosphate hydrolases"/>
    <property type="match status" value="1"/>
</dbReference>
<proteinExistence type="inferred from homology"/>